<feature type="chain" id="PRO_1000015096" description="Small ribosomal subunit protein uS10">
    <location>
        <begin position="1"/>
        <end position="102"/>
    </location>
</feature>
<evidence type="ECO:0000255" key="1">
    <source>
        <dbReference type="HAMAP-Rule" id="MF_00508"/>
    </source>
</evidence>
<evidence type="ECO:0000305" key="2"/>
<protein>
    <recommendedName>
        <fullName evidence="1">Small ribosomal subunit protein uS10</fullName>
    </recommendedName>
    <alternativeName>
        <fullName evidence="2">30S ribosomal protein S10</fullName>
    </alternativeName>
</protein>
<reference key="1">
    <citation type="submission" date="2006-03" db="EMBL/GenBank/DDBJ databases">
        <title>Complete sequence of Rhodopseudomonas palustris BisB5.</title>
        <authorList>
            <consortium name="US DOE Joint Genome Institute"/>
            <person name="Copeland A."/>
            <person name="Lucas S."/>
            <person name="Lapidus A."/>
            <person name="Barry K."/>
            <person name="Detter J.C."/>
            <person name="Glavina del Rio T."/>
            <person name="Hammon N."/>
            <person name="Israni S."/>
            <person name="Dalin E."/>
            <person name="Tice H."/>
            <person name="Pitluck S."/>
            <person name="Chain P."/>
            <person name="Malfatti S."/>
            <person name="Shin M."/>
            <person name="Vergez L."/>
            <person name="Schmutz J."/>
            <person name="Larimer F."/>
            <person name="Land M."/>
            <person name="Hauser L."/>
            <person name="Pelletier D.A."/>
            <person name="Kyrpides N."/>
            <person name="Lykidis A."/>
            <person name="Oda Y."/>
            <person name="Harwood C.S."/>
            <person name="Richardson P."/>
        </authorList>
    </citation>
    <scope>NUCLEOTIDE SEQUENCE [LARGE SCALE GENOMIC DNA]</scope>
    <source>
        <strain>BisB5</strain>
    </source>
</reference>
<proteinExistence type="inferred from homology"/>
<name>RS10_RHOPS</name>
<accession>Q134S8</accession>
<comment type="function">
    <text evidence="1">Involved in the binding of tRNA to the ribosomes.</text>
</comment>
<comment type="subunit">
    <text evidence="1">Part of the 30S ribosomal subunit.</text>
</comment>
<comment type="similarity">
    <text evidence="1">Belongs to the universal ribosomal protein uS10 family.</text>
</comment>
<dbReference type="EMBL" id="CP000283">
    <property type="protein sequence ID" value="ABE40411.1"/>
    <property type="molecule type" value="Genomic_DNA"/>
</dbReference>
<dbReference type="SMR" id="Q134S8"/>
<dbReference type="STRING" id="316057.RPD_3185"/>
<dbReference type="KEGG" id="rpd:RPD_3185"/>
<dbReference type="eggNOG" id="COG0051">
    <property type="taxonomic scope" value="Bacteria"/>
</dbReference>
<dbReference type="HOGENOM" id="CLU_122625_1_3_5"/>
<dbReference type="BioCyc" id="RPAL316057:RPD_RS15990-MONOMER"/>
<dbReference type="Proteomes" id="UP000001818">
    <property type="component" value="Chromosome"/>
</dbReference>
<dbReference type="GO" id="GO:1990904">
    <property type="term" value="C:ribonucleoprotein complex"/>
    <property type="evidence" value="ECO:0007669"/>
    <property type="project" value="UniProtKB-KW"/>
</dbReference>
<dbReference type="GO" id="GO:0005840">
    <property type="term" value="C:ribosome"/>
    <property type="evidence" value="ECO:0007669"/>
    <property type="project" value="UniProtKB-KW"/>
</dbReference>
<dbReference type="GO" id="GO:0003735">
    <property type="term" value="F:structural constituent of ribosome"/>
    <property type="evidence" value="ECO:0007669"/>
    <property type="project" value="InterPro"/>
</dbReference>
<dbReference type="GO" id="GO:0000049">
    <property type="term" value="F:tRNA binding"/>
    <property type="evidence" value="ECO:0007669"/>
    <property type="project" value="UniProtKB-UniRule"/>
</dbReference>
<dbReference type="GO" id="GO:0006412">
    <property type="term" value="P:translation"/>
    <property type="evidence" value="ECO:0007669"/>
    <property type="project" value="UniProtKB-UniRule"/>
</dbReference>
<dbReference type="FunFam" id="3.30.70.600:FF:000001">
    <property type="entry name" value="30S ribosomal protein S10"/>
    <property type="match status" value="1"/>
</dbReference>
<dbReference type="Gene3D" id="3.30.70.600">
    <property type="entry name" value="Ribosomal protein S10 domain"/>
    <property type="match status" value="1"/>
</dbReference>
<dbReference type="HAMAP" id="MF_00508">
    <property type="entry name" value="Ribosomal_uS10"/>
    <property type="match status" value="1"/>
</dbReference>
<dbReference type="InterPro" id="IPR001848">
    <property type="entry name" value="Ribosomal_uS10"/>
</dbReference>
<dbReference type="InterPro" id="IPR018268">
    <property type="entry name" value="Ribosomal_uS10_CS"/>
</dbReference>
<dbReference type="InterPro" id="IPR027486">
    <property type="entry name" value="Ribosomal_uS10_dom"/>
</dbReference>
<dbReference type="InterPro" id="IPR036838">
    <property type="entry name" value="Ribosomal_uS10_dom_sf"/>
</dbReference>
<dbReference type="NCBIfam" id="NF001861">
    <property type="entry name" value="PRK00596.1"/>
    <property type="match status" value="1"/>
</dbReference>
<dbReference type="NCBIfam" id="TIGR01049">
    <property type="entry name" value="rpsJ_bact"/>
    <property type="match status" value="1"/>
</dbReference>
<dbReference type="PANTHER" id="PTHR11700">
    <property type="entry name" value="30S RIBOSOMAL PROTEIN S10 FAMILY MEMBER"/>
    <property type="match status" value="1"/>
</dbReference>
<dbReference type="Pfam" id="PF00338">
    <property type="entry name" value="Ribosomal_S10"/>
    <property type="match status" value="1"/>
</dbReference>
<dbReference type="PRINTS" id="PR00971">
    <property type="entry name" value="RIBOSOMALS10"/>
</dbReference>
<dbReference type="SMART" id="SM01403">
    <property type="entry name" value="Ribosomal_S10"/>
    <property type="match status" value="1"/>
</dbReference>
<dbReference type="SUPFAM" id="SSF54999">
    <property type="entry name" value="Ribosomal protein S10"/>
    <property type="match status" value="1"/>
</dbReference>
<dbReference type="PROSITE" id="PS00361">
    <property type="entry name" value="RIBOSOMAL_S10"/>
    <property type="match status" value="1"/>
</dbReference>
<gene>
    <name evidence="1" type="primary">rpsJ</name>
    <name type="ordered locus">RPD_3185</name>
</gene>
<sequence length="102" mass="11669">MNGQNIRIRLKAFDHRILDTSTREIVNTAKRTGAQVRGPIPLPTRIEKFTVNRSPHVDKKSREQFEMRTHKRLLDIVDPTPQTVDALMKLDLAAGVDVEIKL</sequence>
<organism>
    <name type="scientific">Rhodopseudomonas palustris (strain BisB5)</name>
    <dbReference type="NCBI Taxonomy" id="316057"/>
    <lineage>
        <taxon>Bacteria</taxon>
        <taxon>Pseudomonadati</taxon>
        <taxon>Pseudomonadota</taxon>
        <taxon>Alphaproteobacteria</taxon>
        <taxon>Hyphomicrobiales</taxon>
        <taxon>Nitrobacteraceae</taxon>
        <taxon>Rhodopseudomonas</taxon>
    </lineage>
</organism>
<keyword id="KW-0687">Ribonucleoprotein</keyword>
<keyword id="KW-0689">Ribosomal protein</keyword>